<reference key="1">
    <citation type="journal article" date="2003" name="Proc. Natl. Acad. Sci. U.S.A.">
        <title>The complete genome sequence of Mycobacterium bovis.</title>
        <authorList>
            <person name="Garnier T."/>
            <person name="Eiglmeier K."/>
            <person name="Camus J.-C."/>
            <person name="Medina N."/>
            <person name="Mansoor H."/>
            <person name="Pryor M."/>
            <person name="Duthoy S."/>
            <person name="Grondin S."/>
            <person name="Lacroix C."/>
            <person name="Monsempe C."/>
            <person name="Simon S."/>
            <person name="Harris B."/>
            <person name="Atkin R."/>
            <person name="Doggett J."/>
            <person name="Mayes R."/>
            <person name="Keating L."/>
            <person name="Wheeler P.R."/>
            <person name="Parkhill J."/>
            <person name="Barrell B.G."/>
            <person name="Cole S.T."/>
            <person name="Gordon S.V."/>
            <person name="Hewinson R.G."/>
        </authorList>
    </citation>
    <scope>NUCLEOTIDE SEQUENCE [LARGE SCALE GENOMIC DNA]</scope>
    <source>
        <strain>ATCC BAA-935 / AF2122/97</strain>
    </source>
</reference>
<reference key="2">
    <citation type="journal article" date="2017" name="Genome Announc.">
        <title>Updated reference genome sequence and annotation of Mycobacterium bovis AF2122/97.</title>
        <authorList>
            <person name="Malone K.M."/>
            <person name="Farrell D."/>
            <person name="Stuber T.P."/>
            <person name="Schubert O.T."/>
            <person name="Aebersold R."/>
            <person name="Robbe-Austerman S."/>
            <person name="Gordon S.V."/>
        </authorList>
    </citation>
    <scope>NUCLEOTIDE SEQUENCE [LARGE SCALE GENOMIC DNA]</scope>
    <scope>GENOME REANNOTATION</scope>
    <source>
        <strain>ATCC BAA-935 / AF2122/97</strain>
    </source>
</reference>
<protein>
    <recommendedName>
        <fullName>TVP38/TMEM64 family membrane protein Mb1528c</fullName>
    </recommendedName>
</protein>
<name>Y1528_MYCBO</name>
<feature type="chain" id="PRO_0000198639" description="TVP38/TMEM64 family membrane protein Mb1528c">
    <location>
        <begin position="1"/>
        <end position="252"/>
    </location>
</feature>
<feature type="transmembrane region" description="Helical" evidence="1">
    <location>
        <begin position="32"/>
        <end position="52"/>
    </location>
</feature>
<feature type="transmembrane region" description="Helical" evidence="1">
    <location>
        <begin position="64"/>
        <end position="84"/>
    </location>
</feature>
<feature type="transmembrane region" description="Helical" evidence="1">
    <location>
        <begin position="88"/>
        <end position="108"/>
    </location>
</feature>
<feature type="transmembrane region" description="Helical" evidence="1">
    <location>
        <begin position="149"/>
        <end position="169"/>
    </location>
</feature>
<feature type="transmembrane region" description="Helical" evidence="1">
    <location>
        <begin position="177"/>
        <end position="197"/>
    </location>
</feature>
<feature type="transmembrane region" description="Helical" evidence="1">
    <location>
        <begin position="209"/>
        <end position="229"/>
    </location>
</feature>
<evidence type="ECO:0000255" key="1"/>
<evidence type="ECO:0000305" key="2"/>
<accession>P67118</accession>
<accession>A0A1R3XYG9</accession>
<accession>P71772</accession>
<accession>X2BI71</accession>
<sequence length="252" mass="26576">MTAPAICNTTETVHGIATSLGAVARQASLPRIVGTVVGITVLVVVALLVPVPTAVELRDWAKSLGAWFPLAFLLVHTVVTVPPFPRTAFTLAAGLLFGSVVGVFIAVVGSTASAVIAMLLVRATGWQLNSLVRRRAINRLDERLRERGWLAILSLRLIPVVPFAAINYAAGASGVRILSFAWATLAGLLPGTAAVVILGDAFAGSGSPLLILVSVCTGALGLTGLVYEIRNYRRQHRRMPGYDDPVREPALI</sequence>
<proteinExistence type="inferred from homology"/>
<dbReference type="EMBL" id="LT708304">
    <property type="protein sequence ID" value="SIU00131.1"/>
    <property type="molecule type" value="Genomic_DNA"/>
</dbReference>
<dbReference type="RefSeq" id="NP_855180.1">
    <property type="nucleotide sequence ID" value="NC_002945.3"/>
</dbReference>
<dbReference type="RefSeq" id="WP_003407583.1">
    <property type="nucleotide sequence ID" value="NC_002945.4"/>
</dbReference>
<dbReference type="KEGG" id="mbo:BQ2027_MB1528C"/>
<dbReference type="PATRIC" id="fig|233413.5.peg.1670"/>
<dbReference type="Proteomes" id="UP000001419">
    <property type="component" value="Chromosome"/>
</dbReference>
<dbReference type="GO" id="GO:0005886">
    <property type="term" value="C:plasma membrane"/>
    <property type="evidence" value="ECO:0007669"/>
    <property type="project" value="UniProtKB-SubCell"/>
</dbReference>
<dbReference type="InterPro" id="IPR015414">
    <property type="entry name" value="TMEM64"/>
</dbReference>
<dbReference type="InterPro" id="IPR032816">
    <property type="entry name" value="VTT_dom"/>
</dbReference>
<dbReference type="PANTHER" id="PTHR12677">
    <property type="entry name" value="GOLGI APPARATUS MEMBRANE PROTEIN TVP38-RELATED"/>
    <property type="match status" value="1"/>
</dbReference>
<dbReference type="PANTHER" id="PTHR12677:SF59">
    <property type="entry name" value="GOLGI APPARATUS MEMBRANE PROTEIN TVP38-RELATED"/>
    <property type="match status" value="1"/>
</dbReference>
<dbReference type="Pfam" id="PF09335">
    <property type="entry name" value="VTT_dom"/>
    <property type="match status" value="1"/>
</dbReference>
<gene>
    <name type="ordered locus">BQ2027_MB1528C</name>
</gene>
<comment type="subcellular location">
    <subcellularLocation>
        <location evidence="2">Cell membrane</location>
        <topology evidence="2">Multi-pass membrane protein</topology>
    </subcellularLocation>
</comment>
<comment type="similarity">
    <text evidence="2">Belongs to the TVP38/TMEM64 family.</text>
</comment>
<keyword id="KW-1003">Cell membrane</keyword>
<keyword id="KW-0472">Membrane</keyword>
<keyword id="KW-1185">Reference proteome</keyword>
<keyword id="KW-0812">Transmembrane</keyword>
<keyword id="KW-1133">Transmembrane helix</keyword>
<organism>
    <name type="scientific">Mycobacterium bovis (strain ATCC BAA-935 / AF2122/97)</name>
    <dbReference type="NCBI Taxonomy" id="233413"/>
    <lineage>
        <taxon>Bacteria</taxon>
        <taxon>Bacillati</taxon>
        <taxon>Actinomycetota</taxon>
        <taxon>Actinomycetes</taxon>
        <taxon>Mycobacteriales</taxon>
        <taxon>Mycobacteriaceae</taxon>
        <taxon>Mycobacterium</taxon>
        <taxon>Mycobacterium tuberculosis complex</taxon>
    </lineage>
</organism>